<feature type="signal peptide" evidence="2">
    <location>
        <begin position="1"/>
        <end position="21"/>
    </location>
</feature>
<feature type="chain" id="PRO_0000301801" description="Nitrogen permease regulator 3">
    <location>
        <begin position="22"/>
        <end position="844"/>
    </location>
</feature>
<feature type="region of interest" description="Disordered" evidence="3">
    <location>
        <begin position="53"/>
        <end position="113"/>
    </location>
</feature>
<feature type="region of interest" description="Disordered" evidence="3">
    <location>
        <begin position="246"/>
        <end position="310"/>
    </location>
</feature>
<feature type="compositionally biased region" description="Low complexity" evidence="3">
    <location>
        <begin position="57"/>
        <end position="94"/>
    </location>
</feature>
<feature type="compositionally biased region" description="Polar residues" evidence="3">
    <location>
        <begin position="103"/>
        <end position="113"/>
    </location>
</feature>
<feature type="compositionally biased region" description="Basic residues" evidence="3">
    <location>
        <begin position="246"/>
        <end position="262"/>
    </location>
</feature>
<feature type="compositionally biased region" description="Low complexity" evidence="3">
    <location>
        <begin position="263"/>
        <end position="273"/>
    </location>
</feature>
<feature type="compositionally biased region" description="Polar residues" evidence="3">
    <location>
        <begin position="274"/>
        <end position="293"/>
    </location>
</feature>
<feature type="compositionally biased region" description="Acidic residues" evidence="3">
    <location>
        <begin position="297"/>
        <end position="307"/>
    </location>
</feature>
<name>NPR3_KLULA</name>
<sequence length="844" mass="96739">MSTNLPNSCLVQIALTVSTHSGPQLIYHYPPSNYATATNSKKTHHPDIKKRYEYTDSENNSSSDDYSSGLSDSELSTDYADCSSDASESSLDSLPQSNHEDTVNSSTNNTFINNGLRSRQSQISANKLFQVLNQNNNNVAINGENSLRESLHSIRTSTNMSSTTDPRPEDELDAVDEELKILVDDLLDGSIFQQDTFQDISKVLNFNTEFVAELCSPRKEMCNTRFEFTVDDLCFLGLPIHADHKGRWKKSKKRKQASKRSARSSTARNSISRNSVGRNSIGRNRSKTESQGHINDVEEPADDENSDYEPSKSEMLNEMYCVPDAENDEFESLQQSINMFQVCFIMNPKIIEYNERVDDMYHYVVTRLSLILRYIQGKTGYVTRECVKIMKCKDEVSKHSRYYESLKSPWSKGKYMYERILYESSLARALTKCFNCIHNNEIANLEIDGDKIVSLQIPIKNEFSILPNLKEDAVLRGSFLSSILNESFIGRSTSLTNEDSDNLYANHDRLLDYGLLLLDEPENIIKGLENASFDNGVTDLLLINLVRQLKPTIRLGQYKLLIKELIDSNDSSYDDQFCETTLKSLCLHLIYWRHARLILPISSRNTYIVSPLAPISGFSTDDFKHGEYDTLIRQQEVPVNNNDEPSLIYQNKKVFNEKFPSLPSLPSFLQLMSTQKPRPFGHIIPSNEHKSMYLNALAWLMRYGYLTQLLTFVYVRVDKRIKIAVDEDLEKDNLRSNKHEKSGNFVTGGENYNSSEFDDLEMINDNDFTIILEPERNTALEKRWLYKCAEALPTDLQTLFRQVVKYFNGKVSLEYIMIKEGIPKNEIKRLLQALGKYIVEVKHW</sequence>
<proteinExistence type="inferred from homology"/>
<gene>
    <name type="primary">NPR3</name>
    <name type="synonym">RMD11</name>
    <name type="ordered locus">KLLA0F18238g</name>
</gene>
<protein>
    <recommendedName>
        <fullName>Nitrogen permease regulator 3</fullName>
    </recommendedName>
    <alternativeName>
        <fullName>Required for meiotic nuclear division protein 11</fullName>
    </alternativeName>
</protein>
<evidence type="ECO:0000250" key="1"/>
<evidence type="ECO:0000255" key="2"/>
<evidence type="ECO:0000256" key="3">
    <source>
        <dbReference type="SAM" id="MobiDB-lite"/>
    </source>
</evidence>
<evidence type="ECO:0000305" key="4"/>
<accession>Q6CJJ1</accession>
<comment type="function">
    <text evidence="1">Mediates inactivation of the TORC1 complex in response to amino acid starvation. Required for meiotic nuclear division (By similarity).</text>
</comment>
<comment type="similarity">
    <text evidence="4">Belongs to the NPR3 family.</text>
</comment>
<organism>
    <name type="scientific">Kluyveromyces lactis (strain ATCC 8585 / CBS 2359 / DSM 70799 / NBRC 1267 / NRRL Y-1140 / WM37)</name>
    <name type="common">Yeast</name>
    <name type="synonym">Candida sphaerica</name>
    <dbReference type="NCBI Taxonomy" id="284590"/>
    <lineage>
        <taxon>Eukaryota</taxon>
        <taxon>Fungi</taxon>
        <taxon>Dikarya</taxon>
        <taxon>Ascomycota</taxon>
        <taxon>Saccharomycotina</taxon>
        <taxon>Saccharomycetes</taxon>
        <taxon>Saccharomycetales</taxon>
        <taxon>Saccharomycetaceae</taxon>
        <taxon>Kluyveromyces</taxon>
    </lineage>
</organism>
<keyword id="KW-0469">Meiosis</keyword>
<keyword id="KW-1185">Reference proteome</keyword>
<keyword id="KW-0732">Signal</keyword>
<reference key="1">
    <citation type="journal article" date="2004" name="Nature">
        <title>Genome evolution in yeasts.</title>
        <authorList>
            <person name="Dujon B."/>
            <person name="Sherman D."/>
            <person name="Fischer G."/>
            <person name="Durrens P."/>
            <person name="Casaregola S."/>
            <person name="Lafontaine I."/>
            <person name="de Montigny J."/>
            <person name="Marck C."/>
            <person name="Neuveglise C."/>
            <person name="Talla E."/>
            <person name="Goffard N."/>
            <person name="Frangeul L."/>
            <person name="Aigle M."/>
            <person name="Anthouard V."/>
            <person name="Babour A."/>
            <person name="Barbe V."/>
            <person name="Barnay S."/>
            <person name="Blanchin S."/>
            <person name="Beckerich J.-M."/>
            <person name="Beyne E."/>
            <person name="Bleykasten C."/>
            <person name="Boisrame A."/>
            <person name="Boyer J."/>
            <person name="Cattolico L."/>
            <person name="Confanioleri F."/>
            <person name="de Daruvar A."/>
            <person name="Despons L."/>
            <person name="Fabre E."/>
            <person name="Fairhead C."/>
            <person name="Ferry-Dumazet H."/>
            <person name="Groppi A."/>
            <person name="Hantraye F."/>
            <person name="Hennequin C."/>
            <person name="Jauniaux N."/>
            <person name="Joyet P."/>
            <person name="Kachouri R."/>
            <person name="Kerrest A."/>
            <person name="Koszul R."/>
            <person name="Lemaire M."/>
            <person name="Lesur I."/>
            <person name="Ma L."/>
            <person name="Muller H."/>
            <person name="Nicaud J.-M."/>
            <person name="Nikolski M."/>
            <person name="Oztas S."/>
            <person name="Ozier-Kalogeropoulos O."/>
            <person name="Pellenz S."/>
            <person name="Potier S."/>
            <person name="Richard G.-F."/>
            <person name="Straub M.-L."/>
            <person name="Suleau A."/>
            <person name="Swennen D."/>
            <person name="Tekaia F."/>
            <person name="Wesolowski-Louvel M."/>
            <person name="Westhof E."/>
            <person name="Wirth B."/>
            <person name="Zeniou-Meyer M."/>
            <person name="Zivanovic Y."/>
            <person name="Bolotin-Fukuhara M."/>
            <person name="Thierry A."/>
            <person name="Bouchier C."/>
            <person name="Caudron B."/>
            <person name="Scarpelli C."/>
            <person name="Gaillardin C."/>
            <person name="Weissenbach J."/>
            <person name="Wincker P."/>
            <person name="Souciet J.-L."/>
        </authorList>
    </citation>
    <scope>NUCLEOTIDE SEQUENCE [LARGE SCALE GENOMIC DNA]</scope>
    <source>
        <strain>ATCC 8585 / CBS 2359 / DSM 70799 / NBRC 1267 / NRRL Y-1140 / WM37</strain>
    </source>
</reference>
<dbReference type="EMBL" id="CR382126">
    <property type="protein sequence ID" value="CAG98606.1"/>
    <property type="molecule type" value="Genomic_DNA"/>
</dbReference>
<dbReference type="RefSeq" id="XP_455898.1">
    <property type="nucleotide sequence ID" value="XM_455898.1"/>
</dbReference>
<dbReference type="SMR" id="Q6CJJ1"/>
<dbReference type="FunCoup" id="Q6CJJ1">
    <property type="interactions" value="137"/>
</dbReference>
<dbReference type="STRING" id="284590.Q6CJJ1"/>
<dbReference type="PaxDb" id="284590-Q6CJJ1"/>
<dbReference type="KEGG" id="kla:KLLA0_F18238g"/>
<dbReference type="eggNOG" id="ENOG502QW35">
    <property type="taxonomic scope" value="Eukaryota"/>
</dbReference>
<dbReference type="HOGENOM" id="CLU_014314_0_0_1"/>
<dbReference type="InParanoid" id="Q6CJJ1"/>
<dbReference type="OMA" id="RTDYVWK"/>
<dbReference type="Proteomes" id="UP000000598">
    <property type="component" value="Chromosome F"/>
</dbReference>
<dbReference type="GO" id="GO:1990130">
    <property type="term" value="C:GATOR1 complex"/>
    <property type="evidence" value="ECO:0007669"/>
    <property type="project" value="TreeGrafter"/>
</dbReference>
<dbReference type="GO" id="GO:0034198">
    <property type="term" value="P:cellular response to amino acid starvation"/>
    <property type="evidence" value="ECO:0007669"/>
    <property type="project" value="TreeGrafter"/>
</dbReference>
<dbReference type="GO" id="GO:0051321">
    <property type="term" value="P:meiotic cell cycle"/>
    <property type="evidence" value="ECO:0007669"/>
    <property type="project" value="UniProtKB-KW"/>
</dbReference>
<dbReference type="GO" id="GO:1904262">
    <property type="term" value="P:negative regulation of TORC1 signaling"/>
    <property type="evidence" value="ECO:0007669"/>
    <property type="project" value="TreeGrafter"/>
</dbReference>
<dbReference type="GO" id="GO:0010508">
    <property type="term" value="P:positive regulation of autophagy"/>
    <property type="evidence" value="ECO:0007669"/>
    <property type="project" value="TreeGrafter"/>
</dbReference>
<dbReference type="GO" id="GO:0038202">
    <property type="term" value="P:TORC1 signaling"/>
    <property type="evidence" value="ECO:0007669"/>
    <property type="project" value="TreeGrafter"/>
</dbReference>
<dbReference type="InterPro" id="IPR056603">
    <property type="entry name" value="HTH_NPRL3"/>
</dbReference>
<dbReference type="InterPro" id="IPR005365">
    <property type="entry name" value="Npr3"/>
</dbReference>
<dbReference type="PANTHER" id="PTHR13153">
    <property type="entry name" value="CGTHBA PROTEIN -14 GENE PROTEIN"/>
    <property type="match status" value="1"/>
</dbReference>
<dbReference type="PANTHER" id="PTHR13153:SF5">
    <property type="entry name" value="GATOR COMPLEX PROTEIN NPRL3"/>
    <property type="match status" value="1"/>
</dbReference>
<dbReference type="Pfam" id="PF24064">
    <property type="entry name" value="HTH_NPRL3"/>
    <property type="match status" value="1"/>
</dbReference>
<dbReference type="Pfam" id="PF03666">
    <property type="entry name" value="NPR3"/>
    <property type="match status" value="1"/>
</dbReference>